<proteinExistence type="inferred from homology"/>
<name>U17L8_HUMAN</name>
<organism>
    <name type="scientific">Homo sapiens</name>
    <name type="common">Human</name>
    <dbReference type="NCBI Taxonomy" id="9606"/>
    <lineage>
        <taxon>Eukaryota</taxon>
        <taxon>Metazoa</taxon>
        <taxon>Chordata</taxon>
        <taxon>Craniata</taxon>
        <taxon>Vertebrata</taxon>
        <taxon>Euteleostomi</taxon>
        <taxon>Mammalia</taxon>
        <taxon>Eutheria</taxon>
        <taxon>Euarchontoglires</taxon>
        <taxon>Primates</taxon>
        <taxon>Haplorrhini</taxon>
        <taxon>Catarrhini</taxon>
        <taxon>Hominidae</taxon>
        <taxon>Homo</taxon>
    </lineage>
</organism>
<reference key="1">
    <citation type="journal article" date="2006" name="Nature">
        <title>DNA sequence and analysis of human chromosome 8.</title>
        <authorList>
            <person name="Nusbaum C."/>
            <person name="Mikkelsen T.S."/>
            <person name="Zody M.C."/>
            <person name="Asakawa S."/>
            <person name="Taudien S."/>
            <person name="Garber M."/>
            <person name="Kodira C.D."/>
            <person name="Schueler M.G."/>
            <person name="Shimizu A."/>
            <person name="Whittaker C.A."/>
            <person name="Chang J.L."/>
            <person name="Cuomo C.A."/>
            <person name="Dewar K."/>
            <person name="FitzGerald M.G."/>
            <person name="Yang X."/>
            <person name="Allen N.R."/>
            <person name="Anderson S."/>
            <person name="Asakawa T."/>
            <person name="Blechschmidt K."/>
            <person name="Bloom T."/>
            <person name="Borowsky M.L."/>
            <person name="Butler J."/>
            <person name="Cook A."/>
            <person name="Corum B."/>
            <person name="DeArellano K."/>
            <person name="DeCaprio D."/>
            <person name="Dooley K.T."/>
            <person name="Dorris L. III"/>
            <person name="Engels R."/>
            <person name="Gloeckner G."/>
            <person name="Hafez N."/>
            <person name="Hagopian D.S."/>
            <person name="Hall J.L."/>
            <person name="Ishikawa S.K."/>
            <person name="Jaffe D.B."/>
            <person name="Kamat A."/>
            <person name="Kudoh J."/>
            <person name="Lehmann R."/>
            <person name="Lokitsang T."/>
            <person name="Macdonald P."/>
            <person name="Major J.E."/>
            <person name="Matthews C.D."/>
            <person name="Mauceli E."/>
            <person name="Menzel U."/>
            <person name="Mihalev A.H."/>
            <person name="Minoshima S."/>
            <person name="Murayama Y."/>
            <person name="Naylor J.W."/>
            <person name="Nicol R."/>
            <person name="Nguyen C."/>
            <person name="O'Leary S.B."/>
            <person name="O'Neill K."/>
            <person name="Parker S.C.J."/>
            <person name="Polley A."/>
            <person name="Raymond C.K."/>
            <person name="Reichwald K."/>
            <person name="Rodriguez J."/>
            <person name="Sasaki T."/>
            <person name="Schilhabel M."/>
            <person name="Siddiqui R."/>
            <person name="Smith C.L."/>
            <person name="Sneddon T.P."/>
            <person name="Talamas J.A."/>
            <person name="Tenzin P."/>
            <person name="Topham K."/>
            <person name="Venkataraman V."/>
            <person name="Wen G."/>
            <person name="Yamazaki S."/>
            <person name="Young S.K."/>
            <person name="Zeng Q."/>
            <person name="Zimmer A.R."/>
            <person name="Rosenthal A."/>
            <person name="Birren B.W."/>
            <person name="Platzer M."/>
            <person name="Shimizu N."/>
            <person name="Lander E.S."/>
        </authorList>
    </citation>
    <scope>NUCLEOTIDE SEQUENCE [LARGE SCALE GENOMIC DNA]</scope>
</reference>
<reference key="2">
    <citation type="journal article" date="2005" name="Genomics">
        <title>The DUB/USP17 deubiquitinating enzymes, a multigene family within a tandemly repeated sequence.</title>
        <authorList>
            <person name="Burrows J.F."/>
            <person name="McGrattan M.J."/>
            <person name="Johnston J.A."/>
        </authorList>
    </citation>
    <scope>NOMENCLATURE</scope>
</reference>
<reference key="3">
    <citation type="journal article" date="2006" name="BMC Genomics">
        <title>Hyaluronan- and RNA-binding deubiquitinating enzymes of USP17 family members associated with cell viability.</title>
        <authorList>
            <person name="Shin J.-M."/>
            <person name="Yoo K.-J."/>
            <person name="Kim M.-S."/>
            <person name="Kim D."/>
            <person name="Baek K.-H."/>
        </authorList>
    </citation>
    <scope>NOMENCLATURE</scope>
</reference>
<gene>
    <name type="primary">USP17L8</name>
</gene>
<sequence>MEDDSLYLGGEWQFNHFSKLTSPRPDAAFAEIQRTSLPEKSPLSSETRVDLCDDLAPVARQLAPREKLPLSSRRPAAVGAGLQNMGNTCYLNASLQCLTYTPPLANYMLSREHSQTCQRPKCCMLCTMQAHITWALHSPGHVIQPSQALAAGFHRGKQEDAHEFLMFTVDAMKKACLPGHKQVDHHSKDTTLIHQIFGGCWRSQIKCLHCHGISDTFDPYLDIALDIQAAQSVKQALEQLVKPEELNGENAYPCGLCLQRAPASNTLTLHTSAKVLILVLKRFCDVTGNKLAKNVQYPECLDMQPYMSQQNTGPLVYVLYAVLVHAGWSCHNGYYFSYVKAQEGQWYKMDDAEVTACSITSVLSQQAYVLFYIQKSEWERHSESVSRGREPRALGAEDTDRPATQGELKRDHPCLQVPELDEHLVERATEESTLDHWKFPQEQNKMKPEFNVRKVEGTLPPNVLVIHQSKYKCGMKNHHPEQQSSLLNLSSMNSTDQESMNTGTLASLQGRTRRSKGKNKHSKRSLLVCQ</sequence>
<comment type="subcellular location">
    <subcellularLocation>
        <location evidence="1">Nucleus</location>
    </subcellularLocation>
    <subcellularLocation>
        <location evidence="1">Endoplasmic reticulum</location>
    </subcellularLocation>
</comment>
<comment type="similarity">
    <text evidence="3">Belongs to the peptidase C19 family. USP17 subfamily.</text>
</comment>
<comment type="caution">
    <text evidence="3">The RS447 megasatellite DNA is a highly polymorphic conserved tandem repetitive sequence which contains a copy of the USP17 gene. It is present with an interindividual variation in copy number, ranging from 20 to 103, and can be found in the genome both on chromosome 4 and chromosome 8. The high similarity between the UPS17-like genes makes impossible to clearly assign data to one of the genes of the family. Oligonucleotides designed in RNAi experiments are for instance not specific of a given UPS17-like gene.</text>
</comment>
<comment type="caution">
    <text evidence="3">Tyr-334 is present instead of the conserved His which is expected to be an active site residue suggesting that this protein has lost its catalytic activity.</text>
</comment>
<protein>
    <recommendedName>
        <fullName>Inactive ubiquitin carboxyl-terminal hydrolase 17-like protein 8</fullName>
    </recommendedName>
</protein>
<feature type="chain" id="PRO_0000331650" description="Inactive ubiquitin carboxyl-terminal hydrolase 17-like protein 8">
    <location>
        <begin position="1"/>
        <end position="530"/>
    </location>
</feature>
<feature type="domain" description="USP">
    <location>
        <begin position="80"/>
        <end position="375"/>
    </location>
</feature>
<feature type="region of interest" description="Disordered" evidence="2">
    <location>
        <begin position="382"/>
        <end position="412"/>
    </location>
</feature>
<feature type="region of interest" description="Disordered" evidence="2">
    <location>
        <begin position="493"/>
        <end position="530"/>
    </location>
</feature>
<feature type="compositionally biased region" description="Basic and acidic residues" evidence="2">
    <location>
        <begin position="382"/>
        <end position="392"/>
    </location>
</feature>
<feature type="compositionally biased region" description="Polar residues" evidence="2">
    <location>
        <begin position="495"/>
        <end position="510"/>
    </location>
</feature>
<feature type="compositionally biased region" description="Basic residues" evidence="2">
    <location>
        <begin position="511"/>
        <end position="524"/>
    </location>
</feature>
<keyword id="KW-0256">Endoplasmic reticulum</keyword>
<keyword id="KW-0539">Nucleus</keyword>
<keyword id="KW-1185">Reference proteome</keyword>
<dbReference type="EMBL" id="AC130365">
    <property type="status" value="NOT_ANNOTATED_CDS"/>
    <property type="molecule type" value="Genomic_DNA"/>
</dbReference>
<dbReference type="CCDS" id="CCDS78300.1"/>
<dbReference type="RefSeq" id="NP_001243801.1">
    <property type="nucleotide sequence ID" value="NM_001256872.1"/>
</dbReference>
<dbReference type="SMR" id="P0C7I0"/>
<dbReference type="FunCoup" id="P0C7I0">
    <property type="interactions" value="446"/>
</dbReference>
<dbReference type="STRING" id="9606.ENSP00000485306"/>
<dbReference type="MEROPS" id="C19.986"/>
<dbReference type="iPTMnet" id="P0C7I0"/>
<dbReference type="PhosphoSitePlus" id="P0C7I0"/>
<dbReference type="BioMuta" id="USP17L8"/>
<dbReference type="DMDM" id="187653909"/>
<dbReference type="MassIVE" id="P0C7I0"/>
<dbReference type="PaxDb" id="9606-ENSP00000485306"/>
<dbReference type="Antibodypedia" id="76465">
    <property type="antibodies" value="3 antibodies from 1 providers"/>
</dbReference>
<dbReference type="DNASU" id="392188"/>
<dbReference type="Ensembl" id="ENST00000527080.1">
    <property type="protein sequence ID" value="ENSP00000485306.1"/>
    <property type="gene ID" value="ENSG00000237038.5"/>
</dbReference>
<dbReference type="GeneID" id="392188"/>
<dbReference type="KEGG" id="hsa:392188"/>
<dbReference type="MANE-Select" id="ENST00000527080.1">
    <property type="protein sequence ID" value="ENSP00000485306.1"/>
    <property type="RefSeq nucleotide sequence ID" value="NM_001256872.1"/>
    <property type="RefSeq protein sequence ID" value="NP_001243801.1"/>
</dbReference>
<dbReference type="UCSC" id="uc031tae.1">
    <property type="organism name" value="human"/>
</dbReference>
<dbReference type="AGR" id="HGNC:37181"/>
<dbReference type="CTD" id="392188"/>
<dbReference type="GeneCards" id="USP17L8"/>
<dbReference type="HGNC" id="HGNC:37181">
    <property type="gene designation" value="USP17L8"/>
</dbReference>
<dbReference type="HPA" id="ENSG00000237038">
    <property type="expression patterns" value="Not detected"/>
</dbReference>
<dbReference type="neXtProt" id="NX_P0C7I0"/>
<dbReference type="VEuPathDB" id="HostDB:ENSG00000237038"/>
<dbReference type="eggNOG" id="KOG1865">
    <property type="taxonomic scope" value="Eukaryota"/>
</dbReference>
<dbReference type="GeneTree" id="ENSGT00940000161948"/>
<dbReference type="HOGENOM" id="CLU_008279_10_0_1"/>
<dbReference type="InParanoid" id="P0C7I0"/>
<dbReference type="OMA" id="CTLSAMH"/>
<dbReference type="OrthoDB" id="9523253at2759"/>
<dbReference type="PAN-GO" id="P0C7I0">
    <property type="GO annotations" value="6 GO annotations based on evolutionary models"/>
</dbReference>
<dbReference type="PhylomeDB" id="P0C7I0"/>
<dbReference type="PathwayCommons" id="P0C7I0"/>
<dbReference type="Reactome" id="R-HSA-5689880">
    <property type="pathway name" value="Ub-specific processing proteases"/>
</dbReference>
<dbReference type="BioGRID-ORCS" id="392188">
    <property type="hits" value="9 hits in 223 CRISPR screens"/>
</dbReference>
<dbReference type="GenomeRNAi" id="392188"/>
<dbReference type="Pharos" id="P0C7I0">
    <property type="development level" value="Tdark"/>
</dbReference>
<dbReference type="PRO" id="PR:P0C7I0"/>
<dbReference type="Proteomes" id="UP000005640">
    <property type="component" value="Chromosome 8"/>
</dbReference>
<dbReference type="RNAct" id="P0C7I0">
    <property type="molecule type" value="protein"/>
</dbReference>
<dbReference type="Bgee" id="ENSG00000237038">
    <property type="expression patterns" value="Expressed in developing anatomical structure and 1 other cell type or tissue"/>
</dbReference>
<dbReference type="GO" id="GO:0005829">
    <property type="term" value="C:cytosol"/>
    <property type="evidence" value="ECO:0000318"/>
    <property type="project" value="GO_Central"/>
</dbReference>
<dbReference type="GO" id="GO:0005783">
    <property type="term" value="C:endoplasmic reticulum"/>
    <property type="evidence" value="ECO:0007669"/>
    <property type="project" value="UniProtKB-SubCell"/>
</dbReference>
<dbReference type="GO" id="GO:0005634">
    <property type="term" value="C:nucleus"/>
    <property type="evidence" value="ECO:0000318"/>
    <property type="project" value="GO_Central"/>
</dbReference>
<dbReference type="GO" id="GO:0004843">
    <property type="term" value="F:cysteine-type deubiquitinase activity"/>
    <property type="evidence" value="ECO:0000318"/>
    <property type="project" value="GO_Central"/>
</dbReference>
<dbReference type="GO" id="GO:0016579">
    <property type="term" value="P:protein deubiquitination"/>
    <property type="evidence" value="ECO:0007669"/>
    <property type="project" value="InterPro"/>
</dbReference>
<dbReference type="GO" id="GO:0042981">
    <property type="term" value="P:regulation of apoptotic process"/>
    <property type="evidence" value="ECO:0000318"/>
    <property type="project" value="GO_Central"/>
</dbReference>
<dbReference type="GO" id="GO:0031647">
    <property type="term" value="P:regulation of protein stability"/>
    <property type="evidence" value="ECO:0000318"/>
    <property type="project" value="GO_Central"/>
</dbReference>
<dbReference type="CDD" id="cd02661">
    <property type="entry name" value="Peptidase_C19E"/>
    <property type="match status" value="1"/>
</dbReference>
<dbReference type="FunFam" id="3.90.70.10:FF:000070">
    <property type="entry name" value="Ubiquitin carboxyl-terminal hydrolase 17-like protein 17"/>
    <property type="match status" value="1"/>
</dbReference>
<dbReference type="Gene3D" id="3.90.70.10">
    <property type="entry name" value="Cysteine proteinases"/>
    <property type="match status" value="1"/>
</dbReference>
<dbReference type="InterPro" id="IPR038765">
    <property type="entry name" value="Papain-like_cys_pep_sf"/>
</dbReference>
<dbReference type="InterPro" id="IPR050164">
    <property type="entry name" value="Peptidase_C19"/>
</dbReference>
<dbReference type="InterPro" id="IPR001394">
    <property type="entry name" value="Peptidase_C19_UCH"/>
</dbReference>
<dbReference type="InterPro" id="IPR018200">
    <property type="entry name" value="USP_CS"/>
</dbReference>
<dbReference type="InterPro" id="IPR028889">
    <property type="entry name" value="USP_dom"/>
</dbReference>
<dbReference type="PANTHER" id="PTHR24006:SF651">
    <property type="entry name" value="INACTIVE UBIQUITIN CARBOXYL-TERMINAL HYDROLASE 17-LIKE PROTEIN 4-RELATED"/>
    <property type="match status" value="1"/>
</dbReference>
<dbReference type="PANTHER" id="PTHR24006">
    <property type="entry name" value="UBIQUITIN CARBOXYL-TERMINAL HYDROLASE"/>
    <property type="match status" value="1"/>
</dbReference>
<dbReference type="Pfam" id="PF00443">
    <property type="entry name" value="UCH"/>
    <property type="match status" value="1"/>
</dbReference>
<dbReference type="SUPFAM" id="SSF54001">
    <property type="entry name" value="Cysteine proteinases"/>
    <property type="match status" value="1"/>
</dbReference>
<dbReference type="PROSITE" id="PS00972">
    <property type="entry name" value="USP_1"/>
    <property type="match status" value="1"/>
</dbReference>
<dbReference type="PROSITE" id="PS50235">
    <property type="entry name" value="USP_3"/>
    <property type="match status" value="1"/>
</dbReference>
<evidence type="ECO:0000250" key="1"/>
<evidence type="ECO:0000256" key="2">
    <source>
        <dbReference type="SAM" id="MobiDB-lite"/>
    </source>
</evidence>
<evidence type="ECO:0000305" key="3"/>
<accession>P0C7I0</accession>